<protein>
    <recommendedName>
        <fullName>CapZ-interacting protein</fullName>
    </recommendedName>
    <alternativeName>
        <fullName>Protein kinase substrate CapZIP</fullName>
    </alternativeName>
</protein>
<sequence length="412" mass="44114">MEERPSETNSNVDSSAQPSVAQLAGRFREHAAVARETPASKPTRRKPPCSLPLFPPKVELGQNGEEKSPSGASHPPKIKVKSSPLIEKLQANLAFDPAALLPGASPKSPGLKAIVSPFHSPPSTPSSPGIRSHPSEAEEVPVSFDQPPEGTHLPSYNKVRTRGSIKRRPPSRRFRRSQSDCGDFRDYRAVEPSQENGAREENGDDVFASKSKDPGSPQLNQEAMADGVEGTPWSAEKPRRRNTCNSTEKPEELVRTPEEANAGEKVGQNPDTASQGHPEVQAPSQTGSPEAENGCGSPREETTPGEHTDTGKATEGTASEERVADEDRLGQKSPDANMPEEEGVVREKAPQTSSGKAEGTTIAEPDTKQKEEAPLEPSCSPGADHAAGEITSEIQNEKAVSMDDIPIEDTRM</sequence>
<proteinExistence type="evidence at protein level"/>
<name>CPZIP_MOUSE</name>
<reference key="1">
    <citation type="journal article" date="2005" name="Science">
        <title>The transcriptional landscape of the mammalian genome.</title>
        <authorList>
            <person name="Carninci P."/>
            <person name="Kasukawa T."/>
            <person name="Katayama S."/>
            <person name="Gough J."/>
            <person name="Frith M.C."/>
            <person name="Maeda N."/>
            <person name="Oyama R."/>
            <person name="Ravasi T."/>
            <person name="Lenhard B."/>
            <person name="Wells C."/>
            <person name="Kodzius R."/>
            <person name="Shimokawa K."/>
            <person name="Bajic V.B."/>
            <person name="Brenner S.E."/>
            <person name="Batalov S."/>
            <person name="Forrest A.R."/>
            <person name="Zavolan M."/>
            <person name="Davis M.J."/>
            <person name="Wilming L.G."/>
            <person name="Aidinis V."/>
            <person name="Allen J.E."/>
            <person name="Ambesi-Impiombato A."/>
            <person name="Apweiler R."/>
            <person name="Aturaliya R.N."/>
            <person name="Bailey T.L."/>
            <person name="Bansal M."/>
            <person name="Baxter L."/>
            <person name="Beisel K.W."/>
            <person name="Bersano T."/>
            <person name="Bono H."/>
            <person name="Chalk A.M."/>
            <person name="Chiu K.P."/>
            <person name="Choudhary V."/>
            <person name="Christoffels A."/>
            <person name="Clutterbuck D.R."/>
            <person name="Crowe M.L."/>
            <person name="Dalla E."/>
            <person name="Dalrymple B.P."/>
            <person name="de Bono B."/>
            <person name="Della Gatta G."/>
            <person name="di Bernardo D."/>
            <person name="Down T."/>
            <person name="Engstrom P."/>
            <person name="Fagiolini M."/>
            <person name="Faulkner G."/>
            <person name="Fletcher C.F."/>
            <person name="Fukushima T."/>
            <person name="Furuno M."/>
            <person name="Futaki S."/>
            <person name="Gariboldi M."/>
            <person name="Georgii-Hemming P."/>
            <person name="Gingeras T.R."/>
            <person name="Gojobori T."/>
            <person name="Green R.E."/>
            <person name="Gustincich S."/>
            <person name="Harbers M."/>
            <person name="Hayashi Y."/>
            <person name="Hensch T.K."/>
            <person name="Hirokawa N."/>
            <person name="Hill D."/>
            <person name="Huminiecki L."/>
            <person name="Iacono M."/>
            <person name="Ikeo K."/>
            <person name="Iwama A."/>
            <person name="Ishikawa T."/>
            <person name="Jakt M."/>
            <person name="Kanapin A."/>
            <person name="Katoh M."/>
            <person name="Kawasawa Y."/>
            <person name="Kelso J."/>
            <person name="Kitamura H."/>
            <person name="Kitano H."/>
            <person name="Kollias G."/>
            <person name="Krishnan S.P."/>
            <person name="Kruger A."/>
            <person name="Kummerfeld S.K."/>
            <person name="Kurochkin I.V."/>
            <person name="Lareau L.F."/>
            <person name="Lazarevic D."/>
            <person name="Lipovich L."/>
            <person name="Liu J."/>
            <person name="Liuni S."/>
            <person name="McWilliam S."/>
            <person name="Madan Babu M."/>
            <person name="Madera M."/>
            <person name="Marchionni L."/>
            <person name="Matsuda H."/>
            <person name="Matsuzawa S."/>
            <person name="Miki H."/>
            <person name="Mignone F."/>
            <person name="Miyake S."/>
            <person name="Morris K."/>
            <person name="Mottagui-Tabar S."/>
            <person name="Mulder N."/>
            <person name="Nakano N."/>
            <person name="Nakauchi H."/>
            <person name="Ng P."/>
            <person name="Nilsson R."/>
            <person name="Nishiguchi S."/>
            <person name="Nishikawa S."/>
            <person name="Nori F."/>
            <person name="Ohara O."/>
            <person name="Okazaki Y."/>
            <person name="Orlando V."/>
            <person name="Pang K.C."/>
            <person name="Pavan W.J."/>
            <person name="Pavesi G."/>
            <person name="Pesole G."/>
            <person name="Petrovsky N."/>
            <person name="Piazza S."/>
            <person name="Reed J."/>
            <person name="Reid J.F."/>
            <person name="Ring B.Z."/>
            <person name="Ringwald M."/>
            <person name="Rost B."/>
            <person name="Ruan Y."/>
            <person name="Salzberg S.L."/>
            <person name="Sandelin A."/>
            <person name="Schneider C."/>
            <person name="Schoenbach C."/>
            <person name="Sekiguchi K."/>
            <person name="Semple C.A."/>
            <person name="Seno S."/>
            <person name="Sessa L."/>
            <person name="Sheng Y."/>
            <person name="Shibata Y."/>
            <person name="Shimada H."/>
            <person name="Shimada K."/>
            <person name="Silva D."/>
            <person name="Sinclair B."/>
            <person name="Sperling S."/>
            <person name="Stupka E."/>
            <person name="Sugiura K."/>
            <person name="Sultana R."/>
            <person name="Takenaka Y."/>
            <person name="Taki K."/>
            <person name="Tammoja K."/>
            <person name="Tan S.L."/>
            <person name="Tang S."/>
            <person name="Taylor M.S."/>
            <person name="Tegner J."/>
            <person name="Teichmann S.A."/>
            <person name="Ueda H.R."/>
            <person name="van Nimwegen E."/>
            <person name="Verardo R."/>
            <person name="Wei C.L."/>
            <person name="Yagi K."/>
            <person name="Yamanishi H."/>
            <person name="Zabarovsky E."/>
            <person name="Zhu S."/>
            <person name="Zimmer A."/>
            <person name="Hide W."/>
            <person name="Bult C."/>
            <person name="Grimmond S.M."/>
            <person name="Teasdale R.D."/>
            <person name="Liu E.T."/>
            <person name="Brusic V."/>
            <person name="Quackenbush J."/>
            <person name="Wahlestedt C."/>
            <person name="Mattick J.S."/>
            <person name="Hume D.A."/>
            <person name="Kai C."/>
            <person name="Sasaki D."/>
            <person name="Tomaru Y."/>
            <person name="Fukuda S."/>
            <person name="Kanamori-Katayama M."/>
            <person name="Suzuki M."/>
            <person name="Aoki J."/>
            <person name="Arakawa T."/>
            <person name="Iida J."/>
            <person name="Imamura K."/>
            <person name="Itoh M."/>
            <person name="Kato T."/>
            <person name="Kawaji H."/>
            <person name="Kawagashira N."/>
            <person name="Kawashima T."/>
            <person name="Kojima M."/>
            <person name="Kondo S."/>
            <person name="Konno H."/>
            <person name="Nakano K."/>
            <person name="Ninomiya N."/>
            <person name="Nishio T."/>
            <person name="Okada M."/>
            <person name="Plessy C."/>
            <person name="Shibata K."/>
            <person name="Shiraki T."/>
            <person name="Suzuki S."/>
            <person name="Tagami M."/>
            <person name="Waki K."/>
            <person name="Watahiki A."/>
            <person name="Okamura-Oho Y."/>
            <person name="Suzuki H."/>
            <person name="Kawai J."/>
            <person name="Hayashizaki Y."/>
        </authorList>
    </citation>
    <scope>NUCLEOTIDE SEQUENCE [LARGE SCALE MRNA] (ISOFORMS 1 AND 2)</scope>
    <source>
        <strain>C57BL/6J</strain>
        <strain>NOD</strain>
        <tissue>Inner ear</tissue>
        <tissue>Kidney</tissue>
    </source>
</reference>
<reference key="2">
    <citation type="journal article" date="2004" name="Genome Res.">
        <title>The status, quality, and expansion of the NIH full-length cDNA project: the Mammalian Gene Collection (MGC).</title>
        <authorList>
            <consortium name="The MGC Project Team"/>
        </authorList>
    </citation>
    <scope>NUCLEOTIDE SEQUENCE [LARGE SCALE MRNA] (ISOFORM 1)</scope>
    <source>
        <strain>Czech II</strain>
        <tissue>Mammary tumor</tissue>
    </source>
</reference>
<reference key="3">
    <citation type="journal article" date="2007" name="Proc. Natl. Acad. Sci. U.S.A.">
        <title>Large-scale phosphorylation analysis of mouse liver.</title>
        <authorList>
            <person name="Villen J."/>
            <person name="Beausoleil S.A."/>
            <person name="Gerber S.A."/>
            <person name="Gygi S.P."/>
        </authorList>
    </citation>
    <scope>PHOSPHORYLATION [LARGE SCALE ANALYSIS] AT SER-179 AND SER-297</scope>
    <scope>IDENTIFICATION BY MASS SPECTROMETRY [LARGE SCALE ANALYSIS]</scope>
    <source>
        <tissue>Liver</tissue>
    </source>
</reference>
<reference key="4">
    <citation type="journal article" date="2010" name="Cell">
        <title>A tissue-specific atlas of mouse protein phosphorylation and expression.</title>
        <authorList>
            <person name="Huttlin E.L."/>
            <person name="Jedrychowski M.P."/>
            <person name="Elias J.E."/>
            <person name="Goswami T."/>
            <person name="Rad R."/>
            <person name="Beausoleil S.A."/>
            <person name="Villen J."/>
            <person name="Haas W."/>
            <person name="Sowa M.E."/>
            <person name="Gygi S.P."/>
        </authorList>
    </citation>
    <scope>PHOSPHORYLATION [LARGE SCALE ANALYSIS] AT SER-105; SER-108; SER-116; SER-120; SER-123; THR-124; SER-126; SER-127; SER-135; SER-143; SER-179; SER-216; THR-243; THR-256; SER-333 AND SER-401</scope>
    <scope>IDENTIFICATION BY MASS SPECTROMETRY [LARGE SCALE ANALYSIS]</scope>
    <source>
        <tissue>Brain</tissue>
        <tissue>Brown adipose tissue</tissue>
        <tissue>Heart</tissue>
        <tissue>Kidney</tissue>
        <tissue>Liver</tissue>
        <tissue>Lung</tissue>
        <tissue>Pancreas</tissue>
        <tissue>Spleen</tissue>
        <tissue>Testis</tissue>
    </source>
</reference>
<comment type="function">
    <text evidence="1">Stress-induced phosphorylation of CAPZIP may regulate the ability of F-actin-capping protein to remodel actin filament assembly.</text>
</comment>
<comment type="subunit">
    <text evidence="1">Interacts with CAPZA2 and CAPZB.</text>
</comment>
<comment type="alternative products">
    <event type="alternative splicing"/>
    <isoform>
        <id>Q3UZA1-1</id>
        <name>1</name>
        <sequence type="displayed"/>
    </isoform>
    <isoform>
        <id>Q3UZA1-2</id>
        <name>2</name>
        <sequence type="described" ref="VSP_031649"/>
    </isoform>
</comment>
<comment type="PTM">
    <text evidence="1">Dephosphorylation results in its dissociation from CAPZA2.</text>
</comment>
<organism>
    <name type="scientific">Mus musculus</name>
    <name type="common">Mouse</name>
    <dbReference type="NCBI Taxonomy" id="10090"/>
    <lineage>
        <taxon>Eukaryota</taxon>
        <taxon>Metazoa</taxon>
        <taxon>Chordata</taxon>
        <taxon>Craniata</taxon>
        <taxon>Vertebrata</taxon>
        <taxon>Euteleostomi</taxon>
        <taxon>Mammalia</taxon>
        <taxon>Eutheria</taxon>
        <taxon>Euarchontoglires</taxon>
        <taxon>Glires</taxon>
        <taxon>Rodentia</taxon>
        <taxon>Myomorpha</taxon>
        <taxon>Muroidea</taxon>
        <taxon>Muridae</taxon>
        <taxon>Murinae</taxon>
        <taxon>Mus</taxon>
        <taxon>Mus</taxon>
    </lineage>
</organism>
<keyword id="KW-0025">Alternative splicing</keyword>
<keyword id="KW-0597">Phosphoprotein</keyword>
<keyword id="KW-1185">Reference proteome</keyword>
<accession>Q3UZA1</accession>
<accession>Q3TAD8</accession>
<accession>Q3TBC2</accession>
<accession>Q3TGA5</accession>
<accession>Q8R3A0</accession>
<evidence type="ECO:0000250" key="1"/>
<evidence type="ECO:0000250" key="2">
    <source>
        <dbReference type="UniProtKB" id="Q6JBY9"/>
    </source>
</evidence>
<evidence type="ECO:0000256" key="3">
    <source>
        <dbReference type="SAM" id="MobiDB-lite"/>
    </source>
</evidence>
<evidence type="ECO:0000303" key="4">
    <source>
    </source>
</evidence>
<evidence type="ECO:0000305" key="5"/>
<evidence type="ECO:0007744" key="6">
    <source>
    </source>
</evidence>
<evidence type="ECO:0007744" key="7">
    <source>
    </source>
</evidence>
<dbReference type="EMBL" id="AK133961">
    <property type="protein sequence ID" value="BAE21956.1"/>
    <property type="molecule type" value="mRNA"/>
</dbReference>
<dbReference type="EMBL" id="AK158429">
    <property type="protein sequence ID" value="BAE34505.1"/>
    <property type="molecule type" value="mRNA"/>
</dbReference>
<dbReference type="EMBL" id="AK168816">
    <property type="protein sequence ID" value="BAE40643.1"/>
    <property type="molecule type" value="mRNA"/>
</dbReference>
<dbReference type="EMBL" id="AK171323">
    <property type="protein sequence ID" value="BAE42392.1"/>
    <property type="molecule type" value="mRNA"/>
</dbReference>
<dbReference type="EMBL" id="AK171914">
    <property type="protein sequence ID" value="BAE42730.1"/>
    <property type="molecule type" value="mRNA"/>
</dbReference>
<dbReference type="EMBL" id="BC025872">
    <property type="protein sequence ID" value="AAH25872.1"/>
    <property type="molecule type" value="mRNA"/>
</dbReference>
<dbReference type="CCDS" id="CCDS48425.1">
    <molecule id="Q3UZA1-2"/>
</dbReference>
<dbReference type="CCDS" id="CCDS48426.1">
    <molecule id="Q3UZA1-1"/>
</dbReference>
<dbReference type="RefSeq" id="NP_001033935.1">
    <molecule id="Q3UZA1-2"/>
    <property type="nucleotide sequence ID" value="NM_001038846.1"/>
</dbReference>
<dbReference type="RefSeq" id="NP_848708.2">
    <molecule id="Q3UZA1-1"/>
    <property type="nucleotide sequence ID" value="NM_178593.3"/>
</dbReference>
<dbReference type="RefSeq" id="XP_006496846.1">
    <molecule id="Q3UZA1-1"/>
    <property type="nucleotide sequence ID" value="XM_006496783.3"/>
</dbReference>
<dbReference type="BioGRID" id="230536">
    <property type="interactions" value="21"/>
</dbReference>
<dbReference type="FunCoup" id="Q3UZA1">
    <property type="interactions" value="58"/>
</dbReference>
<dbReference type="STRING" id="10090.ENSMUSP00000043724"/>
<dbReference type="GlyGen" id="Q3UZA1">
    <property type="glycosylation" value="2 sites, 1 O-linked glycan (1 site)"/>
</dbReference>
<dbReference type="iPTMnet" id="Q3UZA1"/>
<dbReference type="PhosphoSitePlus" id="Q3UZA1"/>
<dbReference type="CPTAC" id="non-CPTAC-3907"/>
<dbReference type="jPOST" id="Q3UZA1"/>
<dbReference type="PaxDb" id="10090-ENSMUSP00000043724"/>
<dbReference type="PeptideAtlas" id="Q3UZA1"/>
<dbReference type="ProteomicsDB" id="283946">
    <molecule id="Q3UZA1-1"/>
</dbReference>
<dbReference type="ProteomicsDB" id="283947">
    <molecule id="Q3UZA1-2"/>
</dbReference>
<dbReference type="Antibodypedia" id="34342">
    <property type="antibodies" value="75 antibodies from 16 providers"/>
</dbReference>
<dbReference type="DNASU" id="226594"/>
<dbReference type="Ensembl" id="ENSMUST00000040357.11">
    <molecule id="Q3UZA1-1"/>
    <property type="protein sequence ID" value="ENSMUSP00000043724.9"/>
    <property type="gene ID" value="ENSMUSG00000040723.15"/>
</dbReference>
<dbReference type="Ensembl" id="ENSMUST00000097474.9">
    <molecule id="Q3UZA1-2"/>
    <property type="protein sequence ID" value="ENSMUSP00000095082.4"/>
    <property type="gene ID" value="ENSMUSG00000040723.15"/>
</dbReference>
<dbReference type="GeneID" id="226594"/>
<dbReference type="KEGG" id="mmu:226594"/>
<dbReference type="UCSC" id="uc007djj.1">
    <molecule id="Q3UZA1-1"/>
    <property type="organism name" value="mouse"/>
</dbReference>
<dbReference type="UCSC" id="uc007djk.1">
    <molecule id="Q3UZA1-2"/>
    <property type="organism name" value="mouse"/>
</dbReference>
<dbReference type="AGR" id="MGI:2676394"/>
<dbReference type="CTD" id="92241"/>
<dbReference type="MGI" id="MGI:2676394">
    <property type="gene designation" value="Rcsd1"/>
</dbReference>
<dbReference type="VEuPathDB" id="HostDB:ENSMUSG00000040723"/>
<dbReference type="eggNOG" id="ENOG502SRPU">
    <property type="taxonomic scope" value="Eukaryota"/>
</dbReference>
<dbReference type="GeneTree" id="ENSGT00940000153997"/>
<dbReference type="HOGENOM" id="CLU_039301_1_0_1"/>
<dbReference type="InParanoid" id="Q3UZA1"/>
<dbReference type="OMA" id="QEGAETH"/>
<dbReference type="OrthoDB" id="9450049at2759"/>
<dbReference type="PhylomeDB" id="Q3UZA1"/>
<dbReference type="TreeFam" id="TF334159"/>
<dbReference type="BioGRID-ORCS" id="226594">
    <property type="hits" value="2 hits in 77 CRISPR screens"/>
</dbReference>
<dbReference type="ChiTaRS" id="Rcsd1">
    <property type="organism name" value="mouse"/>
</dbReference>
<dbReference type="PRO" id="PR:Q3UZA1"/>
<dbReference type="Proteomes" id="UP000000589">
    <property type="component" value="Chromosome 1"/>
</dbReference>
<dbReference type="RNAct" id="Q3UZA1">
    <property type="molecule type" value="protein"/>
</dbReference>
<dbReference type="Bgee" id="ENSMUSG00000040723">
    <property type="expression patterns" value="Expressed in granulocyte and 228 other cell types or tissues"/>
</dbReference>
<dbReference type="ExpressionAtlas" id="Q3UZA1">
    <property type="expression patterns" value="baseline and differential"/>
</dbReference>
<dbReference type="GO" id="GO:0051015">
    <property type="term" value="F:actin filament binding"/>
    <property type="evidence" value="ECO:0007669"/>
    <property type="project" value="Ensembl"/>
</dbReference>
<dbReference type="GO" id="GO:0071474">
    <property type="term" value="P:cellular hyperosmotic response"/>
    <property type="evidence" value="ECO:0007669"/>
    <property type="project" value="Ensembl"/>
</dbReference>
<dbReference type="GO" id="GO:0003009">
    <property type="term" value="P:skeletal muscle contraction"/>
    <property type="evidence" value="ECO:0000250"/>
    <property type="project" value="BHF-UCL"/>
</dbReference>
<dbReference type="InterPro" id="IPR029341">
    <property type="entry name" value="FAM21/CAPZIP"/>
</dbReference>
<dbReference type="InterPro" id="IPR007850">
    <property type="entry name" value="RCSD"/>
</dbReference>
<dbReference type="PANTHER" id="PTHR21669:SF2">
    <property type="entry name" value="CAPZ-INTERACTING PROTEIN"/>
    <property type="match status" value="1"/>
</dbReference>
<dbReference type="PANTHER" id="PTHR21669">
    <property type="entry name" value="CAPZ-INTERACTING PROTEIN AND RELATED PROTEINS"/>
    <property type="match status" value="1"/>
</dbReference>
<dbReference type="Pfam" id="PF15255">
    <property type="entry name" value="CAP-ZIP_m"/>
    <property type="match status" value="1"/>
</dbReference>
<dbReference type="Pfam" id="PF05177">
    <property type="entry name" value="RCSD"/>
    <property type="match status" value="1"/>
</dbReference>
<gene>
    <name type="primary">Rcsd1</name>
    <name type="synonym">Capzip</name>
</gene>
<feature type="chain" id="PRO_0000320263" description="CapZ-interacting protein">
    <location>
        <begin position="1"/>
        <end position="412"/>
    </location>
</feature>
<feature type="region of interest" description="Disordered" evidence="3">
    <location>
        <begin position="1"/>
        <end position="84"/>
    </location>
</feature>
<feature type="region of interest" description="Disordered" evidence="3">
    <location>
        <begin position="99"/>
        <end position="412"/>
    </location>
</feature>
<feature type="compositionally biased region" description="Polar residues" evidence="3">
    <location>
        <begin position="7"/>
        <end position="20"/>
    </location>
</feature>
<feature type="compositionally biased region" description="Basic residues" evidence="3">
    <location>
        <begin position="159"/>
        <end position="176"/>
    </location>
</feature>
<feature type="compositionally biased region" description="Basic and acidic residues" evidence="3">
    <location>
        <begin position="248"/>
        <end position="258"/>
    </location>
</feature>
<feature type="compositionally biased region" description="Basic and acidic residues" evidence="3">
    <location>
        <begin position="298"/>
        <end position="312"/>
    </location>
</feature>
<feature type="compositionally biased region" description="Basic and acidic residues" evidence="3">
    <location>
        <begin position="319"/>
        <end position="330"/>
    </location>
</feature>
<feature type="modified residue" description="Phosphoserine" evidence="2">
    <location>
        <position position="68"/>
    </location>
</feature>
<feature type="modified residue" description="Phosphoserine" evidence="2">
    <location>
        <position position="82"/>
    </location>
</feature>
<feature type="modified residue" description="Phosphoserine" evidence="2">
    <location>
        <position position="83"/>
    </location>
</feature>
<feature type="modified residue" description="Phosphoserine" evidence="7">
    <location>
        <position position="105"/>
    </location>
</feature>
<feature type="modified residue" description="Phosphoserine" evidence="7">
    <location>
        <position position="108"/>
    </location>
</feature>
<feature type="modified residue" description="Phosphoserine" evidence="7">
    <location>
        <position position="116"/>
    </location>
</feature>
<feature type="modified residue" description="Phosphoserine" evidence="7">
    <location>
        <position position="120"/>
    </location>
</feature>
<feature type="modified residue" description="Phosphoserine" evidence="7">
    <location>
        <position position="123"/>
    </location>
</feature>
<feature type="modified residue" description="Phosphothreonine" evidence="7">
    <location>
        <position position="124"/>
    </location>
</feature>
<feature type="modified residue" description="Phosphoserine" evidence="7">
    <location>
        <position position="126"/>
    </location>
</feature>
<feature type="modified residue" description="Phosphoserine" evidence="7">
    <location>
        <position position="127"/>
    </location>
</feature>
<feature type="modified residue" description="Phosphoserine" evidence="7">
    <location>
        <position position="135"/>
    </location>
</feature>
<feature type="modified residue" description="Phosphoserine" evidence="7">
    <location>
        <position position="143"/>
    </location>
</feature>
<feature type="modified residue" description="Phosphoserine" evidence="2">
    <location>
        <position position="177"/>
    </location>
</feature>
<feature type="modified residue" description="Phosphoserine" evidence="6 7">
    <location>
        <position position="179"/>
    </location>
</feature>
<feature type="modified residue" description="Phosphoserine" evidence="7">
    <location>
        <position position="216"/>
    </location>
</feature>
<feature type="modified residue" description="Phosphothreonine" evidence="7">
    <location>
        <position position="243"/>
    </location>
</feature>
<feature type="modified residue" description="Phosphothreonine" evidence="7">
    <location>
        <position position="256"/>
    </location>
</feature>
<feature type="modified residue" description="Phosphoserine" evidence="6">
    <location>
        <position position="297"/>
    </location>
</feature>
<feature type="modified residue" description="Phosphoserine" evidence="7">
    <location>
        <position position="333"/>
    </location>
</feature>
<feature type="modified residue" description="Phosphoserine" evidence="7">
    <location>
        <position position="401"/>
    </location>
</feature>
<feature type="splice variant" id="VSP_031649" description="In isoform 2." evidence="4">
    <location>
        <begin position="36"/>
        <end position="65"/>
    </location>
</feature>
<feature type="sequence conflict" description="In Ref. 2; AAH25872." evidence="5" ref="2">
    <original>V</original>
    <variation>I</variation>
    <location>
        <position position="115"/>
    </location>
</feature>
<feature type="sequence conflict" description="In Ref. 1; BAE40643." evidence="5" ref="1">
    <original>S</original>
    <variation>G</variation>
    <location>
        <position position="120"/>
    </location>
</feature>
<feature type="sequence conflict" description="In Ref. 1; BAE40643." evidence="5" ref="1">
    <original>R</original>
    <variation>K</variation>
    <location>
        <position position="162"/>
    </location>
</feature>
<feature type="sequence conflict" description="In Ref. 2; AAH25872." evidence="5" ref="2">
    <original>A</original>
    <variation>P</variation>
    <location>
        <position position="208"/>
    </location>
</feature>
<feature type="sequence conflict" description="In Ref. 1; BAE34505/BAE42730 and 2; AAH25872." evidence="5" ref="1 2">
    <original>W</original>
    <variation>R</variation>
    <location>
        <position position="233"/>
    </location>
</feature>
<feature type="sequence conflict" description="In Ref. 1; BAE34505/BAE42730." evidence="5" ref="1">
    <original>T</original>
    <variation>I</variation>
    <location>
        <position position="286"/>
    </location>
</feature>
<feature type="sequence conflict" description="In Ref. 2; AAH25872." evidence="5" ref="2">
    <original>T</original>
    <variation>A</variation>
    <location>
        <position position="303"/>
    </location>
</feature>
<feature type="sequence conflict" description="In Ref. 1; BAE34505/BAE42730." evidence="5" ref="1">
    <original>R</original>
    <variation>S</variation>
    <location>
        <position position="328"/>
    </location>
</feature>
<feature type="sequence conflict" description="In Ref. 1; BAE34505/BAE42730." evidence="5" ref="1">
    <original>P</original>
    <variation>R</variation>
    <location>
        <position position="365"/>
    </location>
</feature>
<feature type="sequence conflict" description="In Ref. 1; BAE42392." evidence="5" ref="1">
    <original>V</original>
    <variation>A</variation>
    <location>
        <position position="400"/>
    </location>
</feature>